<comment type="catalytic activity">
    <reaction evidence="1">
        <text>tRNA(His) + L-histidine + ATP = L-histidyl-tRNA(His) + AMP + diphosphate + H(+)</text>
        <dbReference type="Rhea" id="RHEA:17313"/>
        <dbReference type="Rhea" id="RHEA-COMP:9665"/>
        <dbReference type="Rhea" id="RHEA-COMP:9689"/>
        <dbReference type="ChEBI" id="CHEBI:15378"/>
        <dbReference type="ChEBI" id="CHEBI:30616"/>
        <dbReference type="ChEBI" id="CHEBI:33019"/>
        <dbReference type="ChEBI" id="CHEBI:57595"/>
        <dbReference type="ChEBI" id="CHEBI:78442"/>
        <dbReference type="ChEBI" id="CHEBI:78527"/>
        <dbReference type="ChEBI" id="CHEBI:456215"/>
        <dbReference type="EC" id="6.1.1.21"/>
    </reaction>
</comment>
<comment type="subunit">
    <text evidence="1">Homodimer.</text>
</comment>
<comment type="subcellular location">
    <subcellularLocation>
        <location evidence="1">Cytoplasm</location>
    </subcellularLocation>
</comment>
<comment type="similarity">
    <text evidence="1">Belongs to the class-II aminoacyl-tRNA synthetase family.</text>
</comment>
<gene>
    <name evidence="1" type="primary">hisS</name>
    <name type="ordered locus">VCM66_0718</name>
</gene>
<keyword id="KW-0030">Aminoacyl-tRNA synthetase</keyword>
<keyword id="KW-0067">ATP-binding</keyword>
<keyword id="KW-0963">Cytoplasm</keyword>
<keyword id="KW-0436">Ligase</keyword>
<keyword id="KW-0547">Nucleotide-binding</keyword>
<keyword id="KW-0648">Protein biosynthesis</keyword>
<evidence type="ECO:0000255" key="1">
    <source>
        <dbReference type="HAMAP-Rule" id="MF_00127"/>
    </source>
</evidence>
<organism>
    <name type="scientific">Vibrio cholerae serotype O1 (strain M66-2)</name>
    <dbReference type="NCBI Taxonomy" id="579112"/>
    <lineage>
        <taxon>Bacteria</taxon>
        <taxon>Pseudomonadati</taxon>
        <taxon>Pseudomonadota</taxon>
        <taxon>Gammaproteobacteria</taxon>
        <taxon>Vibrionales</taxon>
        <taxon>Vibrionaceae</taxon>
        <taxon>Vibrio</taxon>
    </lineage>
</organism>
<dbReference type="EC" id="6.1.1.21" evidence="1"/>
<dbReference type="EMBL" id="CP001233">
    <property type="protein sequence ID" value="ACP05039.1"/>
    <property type="molecule type" value="Genomic_DNA"/>
</dbReference>
<dbReference type="RefSeq" id="WP_001140461.1">
    <property type="nucleotide sequence ID" value="NC_012578.1"/>
</dbReference>
<dbReference type="SMR" id="C3LT13"/>
<dbReference type="GeneID" id="89515095"/>
<dbReference type="KEGG" id="vcm:VCM66_0718"/>
<dbReference type="HOGENOM" id="CLU_025113_1_1_6"/>
<dbReference type="Proteomes" id="UP000001217">
    <property type="component" value="Chromosome I"/>
</dbReference>
<dbReference type="GO" id="GO:0005737">
    <property type="term" value="C:cytoplasm"/>
    <property type="evidence" value="ECO:0007669"/>
    <property type="project" value="UniProtKB-SubCell"/>
</dbReference>
<dbReference type="GO" id="GO:0005524">
    <property type="term" value="F:ATP binding"/>
    <property type="evidence" value="ECO:0007669"/>
    <property type="project" value="UniProtKB-UniRule"/>
</dbReference>
<dbReference type="GO" id="GO:0004821">
    <property type="term" value="F:histidine-tRNA ligase activity"/>
    <property type="evidence" value="ECO:0007669"/>
    <property type="project" value="UniProtKB-UniRule"/>
</dbReference>
<dbReference type="GO" id="GO:0006427">
    <property type="term" value="P:histidyl-tRNA aminoacylation"/>
    <property type="evidence" value="ECO:0007669"/>
    <property type="project" value="UniProtKB-UniRule"/>
</dbReference>
<dbReference type="CDD" id="cd00773">
    <property type="entry name" value="HisRS-like_core"/>
    <property type="match status" value="1"/>
</dbReference>
<dbReference type="CDD" id="cd00859">
    <property type="entry name" value="HisRS_anticodon"/>
    <property type="match status" value="1"/>
</dbReference>
<dbReference type="FunFam" id="3.30.930.10:FF:000005">
    <property type="entry name" value="Histidine--tRNA ligase"/>
    <property type="match status" value="1"/>
</dbReference>
<dbReference type="FunFam" id="3.40.50.800:FF:000007">
    <property type="entry name" value="Histidine--tRNA ligase"/>
    <property type="match status" value="1"/>
</dbReference>
<dbReference type="Gene3D" id="3.40.50.800">
    <property type="entry name" value="Anticodon-binding domain"/>
    <property type="match status" value="1"/>
</dbReference>
<dbReference type="Gene3D" id="3.30.930.10">
    <property type="entry name" value="Bira Bifunctional Protein, Domain 2"/>
    <property type="match status" value="1"/>
</dbReference>
<dbReference type="HAMAP" id="MF_00127">
    <property type="entry name" value="His_tRNA_synth"/>
    <property type="match status" value="1"/>
</dbReference>
<dbReference type="InterPro" id="IPR006195">
    <property type="entry name" value="aa-tRNA-synth_II"/>
</dbReference>
<dbReference type="InterPro" id="IPR045864">
    <property type="entry name" value="aa-tRNA-synth_II/BPL/LPL"/>
</dbReference>
<dbReference type="InterPro" id="IPR004154">
    <property type="entry name" value="Anticodon-bd"/>
</dbReference>
<dbReference type="InterPro" id="IPR036621">
    <property type="entry name" value="Anticodon-bd_dom_sf"/>
</dbReference>
<dbReference type="InterPro" id="IPR015807">
    <property type="entry name" value="His-tRNA-ligase"/>
</dbReference>
<dbReference type="InterPro" id="IPR041715">
    <property type="entry name" value="HisRS-like_core"/>
</dbReference>
<dbReference type="InterPro" id="IPR004516">
    <property type="entry name" value="HisRS/HisZ"/>
</dbReference>
<dbReference type="InterPro" id="IPR033656">
    <property type="entry name" value="HisRS_anticodon"/>
</dbReference>
<dbReference type="NCBIfam" id="TIGR00442">
    <property type="entry name" value="hisS"/>
    <property type="match status" value="1"/>
</dbReference>
<dbReference type="PANTHER" id="PTHR43707:SF1">
    <property type="entry name" value="HISTIDINE--TRNA LIGASE, MITOCHONDRIAL-RELATED"/>
    <property type="match status" value="1"/>
</dbReference>
<dbReference type="PANTHER" id="PTHR43707">
    <property type="entry name" value="HISTIDYL-TRNA SYNTHETASE"/>
    <property type="match status" value="1"/>
</dbReference>
<dbReference type="Pfam" id="PF03129">
    <property type="entry name" value="HGTP_anticodon"/>
    <property type="match status" value="1"/>
</dbReference>
<dbReference type="Pfam" id="PF13393">
    <property type="entry name" value="tRNA-synt_His"/>
    <property type="match status" value="1"/>
</dbReference>
<dbReference type="PIRSF" id="PIRSF001549">
    <property type="entry name" value="His-tRNA_synth"/>
    <property type="match status" value="1"/>
</dbReference>
<dbReference type="SUPFAM" id="SSF52954">
    <property type="entry name" value="Class II aaRS ABD-related"/>
    <property type="match status" value="1"/>
</dbReference>
<dbReference type="SUPFAM" id="SSF55681">
    <property type="entry name" value="Class II aaRS and biotin synthetases"/>
    <property type="match status" value="1"/>
</dbReference>
<dbReference type="PROSITE" id="PS50862">
    <property type="entry name" value="AA_TRNA_LIGASE_II"/>
    <property type="match status" value="1"/>
</dbReference>
<proteinExistence type="inferred from homology"/>
<feature type="chain" id="PRO_1000199164" description="Histidine--tRNA ligase">
    <location>
        <begin position="1"/>
        <end position="422"/>
    </location>
</feature>
<protein>
    <recommendedName>
        <fullName evidence="1">Histidine--tRNA ligase</fullName>
        <ecNumber evidence="1">6.1.1.21</ecNumber>
    </recommendedName>
    <alternativeName>
        <fullName evidence="1">Histidyl-tRNA synthetase</fullName>
        <shortName evidence="1">HisRS</shortName>
    </alternativeName>
</protein>
<sequence length="422" mass="46929">MAKTIQAIRGMNDCLPTQSPLWQKVEGVVKNVISAYGYSEVRMPIVEMTHLFSRAIGEVTDVVEKEMYTFEDRNGDSLTLRPEGTAGCVRSGIENGLLYNQEQRLWYMGPMFRHERPQKGRYRQFHQCGVEVFGLDGPDVDAELIMMTARLWRELGIAQHVRLELNSIGSLEARANYRTALIDYLEQYQNVLDEDCKRRMYTNPLRVLDSKNPDVQAILGDAPQLSDYLDAESKQHFAGLCELLDAAGIEYTVNQRLVRGLDYYNRTVFEWITESLGSQGTVCGGGRYDGLVEQLGGKPTPAVGFAMGLERLVLMMETLGNTDVRRSVDVYMVTAGEGTMMAGMKLAEQLREQVPGLRVMTHFGGGNFKKQFKRADKVGAAIALVLGEDEVAAQTVVVKDLAGGEQNTVAQAEVAKLLAHLA</sequence>
<reference key="1">
    <citation type="journal article" date="2008" name="PLoS ONE">
        <title>A recalibrated molecular clock and independent origins for the cholera pandemic clones.</title>
        <authorList>
            <person name="Feng L."/>
            <person name="Reeves P.R."/>
            <person name="Lan R."/>
            <person name="Ren Y."/>
            <person name="Gao C."/>
            <person name="Zhou Z."/>
            <person name="Ren Y."/>
            <person name="Cheng J."/>
            <person name="Wang W."/>
            <person name="Wang J."/>
            <person name="Qian W."/>
            <person name="Li D."/>
            <person name="Wang L."/>
        </authorList>
    </citation>
    <scope>NUCLEOTIDE SEQUENCE [LARGE SCALE GENOMIC DNA]</scope>
    <source>
        <strain>M66-2</strain>
    </source>
</reference>
<name>SYH_VIBCM</name>
<accession>C3LT13</accession>